<geneLocation type="chloroplast"/>
<gene>
    <name evidence="2" type="primary">psbH</name>
</gene>
<feature type="initiator methionine" description="Removed" evidence="1">
    <location>
        <position position="1"/>
    </location>
</feature>
<feature type="chain" id="PRO_0000070533" description="Photosystem II reaction center protein H">
    <location>
        <begin position="2"/>
        <end position="73"/>
    </location>
</feature>
<feature type="transmembrane region" description="Helical" evidence="2">
    <location>
        <begin position="41"/>
        <end position="61"/>
    </location>
</feature>
<feature type="region of interest" description="Disordered" evidence="3">
    <location>
        <begin position="1"/>
        <end position="23"/>
    </location>
</feature>
<feature type="modified residue" description="Phosphothreonine" evidence="2">
    <location>
        <position position="3"/>
    </location>
</feature>
<feature type="modified residue" description="Phosphothreonine" evidence="2">
    <location>
        <position position="5"/>
    </location>
</feature>
<name>PSBH_SECCE</name>
<dbReference type="EMBL" id="X07672">
    <property type="protein sequence ID" value="CAA30520.1"/>
    <property type="molecule type" value="Genomic_DNA"/>
</dbReference>
<dbReference type="PIR" id="S01386">
    <property type="entry name" value="S01386"/>
</dbReference>
<dbReference type="RefSeq" id="YP_008239198.1">
    <property type="nucleotide sequence ID" value="NC_021761.1"/>
</dbReference>
<dbReference type="SMR" id="P69554"/>
<dbReference type="EnsemblPlants" id="SECCE5Rv1G0317180.1">
    <property type="protein sequence ID" value="SECCE5Rv1G0317180.1.CDS.1"/>
    <property type="gene ID" value="SECCE5Rv1G0317180"/>
</dbReference>
<dbReference type="EnsemblPlants" id="SECCEUnv1G0548240.1">
    <property type="protein sequence ID" value="SECCEUnv1G0548240.1.CDS.1"/>
    <property type="gene ID" value="SECCEUnv1G0548240"/>
</dbReference>
<dbReference type="GeneID" id="16792728"/>
<dbReference type="Gramene" id="SECCE5Rv1G0317180.1">
    <property type="protein sequence ID" value="SECCE5Rv1G0317180.1.CDS.1"/>
    <property type="gene ID" value="SECCE5Rv1G0317180"/>
</dbReference>
<dbReference type="Gramene" id="SECCEUnv1G0548240.1">
    <property type="protein sequence ID" value="SECCEUnv1G0548240.1.CDS.1"/>
    <property type="gene ID" value="SECCEUnv1G0548240"/>
</dbReference>
<dbReference type="GO" id="GO:0009535">
    <property type="term" value="C:chloroplast thylakoid membrane"/>
    <property type="evidence" value="ECO:0007669"/>
    <property type="project" value="UniProtKB-SubCell"/>
</dbReference>
<dbReference type="GO" id="GO:0009523">
    <property type="term" value="C:photosystem II"/>
    <property type="evidence" value="ECO:0007669"/>
    <property type="project" value="UniProtKB-KW"/>
</dbReference>
<dbReference type="GO" id="GO:0042301">
    <property type="term" value="F:phosphate ion binding"/>
    <property type="evidence" value="ECO:0007669"/>
    <property type="project" value="InterPro"/>
</dbReference>
<dbReference type="GO" id="GO:0015979">
    <property type="term" value="P:photosynthesis"/>
    <property type="evidence" value="ECO:0007669"/>
    <property type="project" value="UniProtKB-UniRule"/>
</dbReference>
<dbReference type="GO" id="GO:0050821">
    <property type="term" value="P:protein stabilization"/>
    <property type="evidence" value="ECO:0007669"/>
    <property type="project" value="InterPro"/>
</dbReference>
<dbReference type="FunFam" id="1.20.5.880:FF:000001">
    <property type="entry name" value="Photosystem II reaction center protein H"/>
    <property type="match status" value="1"/>
</dbReference>
<dbReference type="Gene3D" id="1.20.5.880">
    <property type="entry name" value="Photosystem II reaction center protein H"/>
    <property type="match status" value="1"/>
</dbReference>
<dbReference type="HAMAP" id="MF_00752">
    <property type="entry name" value="PSII_PsbH"/>
    <property type="match status" value="1"/>
</dbReference>
<dbReference type="InterPro" id="IPR001056">
    <property type="entry name" value="PSII_PsbH"/>
</dbReference>
<dbReference type="InterPro" id="IPR036863">
    <property type="entry name" value="PSII_PsbH_sf"/>
</dbReference>
<dbReference type="NCBIfam" id="NF002728">
    <property type="entry name" value="PRK02624.1"/>
    <property type="match status" value="1"/>
</dbReference>
<dbReference type="PANTHER" id="PTHR34469">
    <property type="entry name" value="PHOTOSYSTEM II REACTION CENTER PROTEIN H"/>
    <property type="match status" value="1"/>
</dbReference>
<dbReference type="PANTHER" id="PTHR34469:SF4">
    <property type="entry name" value="PHOTOSYSTEM II REACTION CENTER PROTEIN H"/>
    <property type="match status" value="1"/>
</dbReference>
<dbReference type="Pfam" id="PF00737">
    <property type="entry name" value="PsbH"/>
    <property type="match status" value="1"/>
</dbReference>
<dbReference type="SUPFAM" id="SSF161025">
    <property type="entry name" value="Photosystem II 10 kDa phosphoprotein PsbH"/>
    <property type="match status" value="1"/>
</dbReference>
<keyword id="KW-0150">Chloroplast</keyword>
<keyword id="KW-0472">Membrane</keyword>
<keyword id="KW-0597">Phosphoprotein</keyword>
<keyword id="KW-0602">Photosynthesis</keyword>
<keyword id="KW-0604">Photosystem II</keyword>
<keyword id="KW-0934">Plastid</keyword>
<keyword id="KW-0793">Thylakoid</keyword>
<keyword id="KW-0812">Transmembrane</keyword>
<keyword id="KW-1133">Transmembrane helix</keyword>
<protein>
    <recommendedName>
        <fullName evidence="2">Photosystem II reaction center protein H</fullName>
        <shortName evidence="2">PSII-H</shortName>
    </recommendedName>
    <alternativeName>
        <fullName evidence="2">Photosystem II 10 kDa phosphoprotein</fullName>
    </alternativeName>
</protein>
<organism>
    <name type="scientific">Secale cereale</name>
    <name type="common">Rye</name>
    <dbReference type="NCBI Taxonomy" id="4550"/>
    <lineage>
        <taxon>Eukaryota</taxon>
        <taxon>Viridiplantae</taxon>
        <taxon>Streptophyta</taxon>
        <taxon>Embryophyta</taxon>
        <taxon>Tracheophyta</taxon>
        <taxon>Spermatophyta</taxon>
        <taxon>Magnoliopsida</taxon>
        <taxon>Liliopsida</taxon>
        <taxon>Poales</taxon>
        <taxon>Poaceae</taxon>
        <taxon>BOP clade</taxon>
        <taxon>Pooideae</taxon>
        <taxon>Triticodae</taxon>
        <taxon>Triticeae</taxon>
        <taxon>Hordeinae</taxon>
        <taxon>Secale</taxon>
    </lineage>
</organism>
<reference key="1">
    <citation type="journal article" date="1988" name="Nucleic Acids Res.">
        <title>Nucleotide sequence of rye chloroplast DNA fragment encoding psbB and psbH genes.</title>
        <authorList>
            <person name="Bukharov A.A."/>
            <person name="Kolosov V.L."/>
            <person name="Zolotarev A.S."/>
        </authorList>
    </citation>
    <scope>NUCLEOTIDE SEQUENCE [GENOMIC DNA]</scope>
</reference>
<reference key="2">
    <citation type="journal article" date="1989" name="Bioorg. Khim.">
        <title>Photosystem II of rye. Nucleotide sequence of psbB and psbH genes, coding 47-kDa of chlorophyll(a)-binding and 10-kDa phosphorylated subunits.</title>
        <authorList>
            <person name="Bukharov A.A."/>
            <person name="Kolosov V.L."/>
            <person name="Zolotarev A.S."/>
            <person name="Abdulaev N.G."/>
        </authorList>
    </citation>
    <scope>NUCLEOTIDE SEQUENCE [GENOMIC DNA]</scope>
</reference>
<proteinExistence type="inferred from homology"/>
<sequence>MATQTVEDSSKPRPKRTGAGSLLKPLNSEYGKVAPGWGTTPFMGVAMALFAIFLSIILEIYNSSVLLDGILTN</sequence>
<evidence type="ECO:0000250" key="1">
    <source>
        <dbReference type="UniProtKB" id="P56780"/>
    </source>
</evidence>
<evidence type="ECO:0000255" key="2">
    <source>
        <dbReference type="HAMAP-Rule" id="MF_00752"/>
    </source>
</evidence>
<evidence type="ECO:0000256" key="3">
    <source>
        <dbReference type="SAM" id="MobiDB-lite"/>
    </source>
</evidence>
<accession>P69554</accession>
<accession>P04965</accession>
<accession>P09448</accession>
<comment type="function">
    <text evidence="2">One of the components of the core complex of photosystem II (PSII), required for its stability and/or assembly. PSII is a light-driven water:plastoquinone oxidoreductase that uses light energy to abstract electrons from H(2)O, generating O(2) and a proton gradient subsequently used for ATP formation. It consists of a core antenna complex that captures photons, and an electron transfer chain that converts photonic excitation into a charge separation.</text>
</comment>
<comment type="subunit">
    <text evidence="2">PSII is composed of 1 copy each of membrane proteins PsbA, PsbB, PsbC, PsbD, PsbE, PsbF, PsbH, PsbI, PsbJ, PsbK, PsbL, PsbM, PsbT, PsbX, PsbY, PsbZ, Psb30/Ycf12, at least 3 peripheral proteins of the oxygen-evolving complex and a large number of cofactors. It forms dimeric complexes.</text>
</comment>
<comment type="subcellular location">
    <subcellularLocation>
        <location evidence="2">Plastid</location>
        <location evidence="2">Chloroplast thylakoid membrane</location>
        <topology evidence="2">Single-pass membrane protein</topology>
    </subcellularLocation>
</comment>
<comment type="PTM">
    <text evidence="2">Phosphorylation is a light-dependent reaction catalyzed by a membrane-bound kinase; phosphorylation occurs on Thr residue(s) in the N-terminus of the protein.</text>
</comment>
<comment type="similarity">
    <text evidence="2">Belongs to the PsbH family.</text>
</comment>